<accession>A3DJP2</accession>
<dbReference type="EMBL" id="CP000568">
    <property type="protein sequence ID" value="ABN54171.1"/>
    <property type="molecule type" value="Genomic_DNA"/>
</dbReference>
<dbReference type="SMR" id="A3DJP2"/>
<dbReference type="STRING" id="203119.Cthe_2974"/>
<dbReference type="KEGG" id="cth:Cthe_2974"/>
<dbReference type="eggNOG" id="COG3087">
    <property type="taxonomic scope" value="Bacteria"/>
</dbReference>
<dbReference type="HOGENOM" id="CLU_680972_0_0_9"/>
<dbReference type="Proteomes" id="UP000002145">
    <property type="component" value="Chromosome"/>
</dbReference>
<dbReference type="GO" id="GO:0005886">
    <property type="term" value="C:plasma membrane"/>
    <property type="evidence" value="ECO:0007669"/>
    <property type="project" value="UniProtKB-SubCell"/>
</dbReference>
<dbReference type="InterPro" id="IPR024449">
    <property type="entry name" value="Anti-sigma_RsgI_N"/>
</dbReference>
<dbReference type="InterPro" id="IPR055431">
    <property type="entry name" value="RsgI_M"/>
</dbReference>
<dbReference type="Pfam" id="PF23750">
    <property type="entry name" value="RsgI_M"/>
    <property type="match status" value="1"/>
</dbReference>
<dbReference type="Pfam" id="PF12791">
    <property type="entry name" value="RsgI_N"/>
    <property type="match status" value="1"/>
</dbReference>
<dbReference type="PROSITE" id="PS51849">
    <property type="entry name" value="RSGI_N"/>
    <property type="match status" value="1"/>
</dbReference>
<name>RSGI8_ACET2</name>
<gene>
    <name evidence="5" type="primary">rsgI8</name>
    <name evidence="7" type="ordered locus">Cthe_2974</name>
</gene>
<reference key="1">
    <citation type="submission" date="2007-02" db="EMBL/GenBank/DDBJ databases">
        <title>Complete sequence of Clostridium thermocellum ATCC 27405.</title>
        <authorList>
            <consortium name="US DOE Joint Genome Institute"/>
            <person name="Copeland A."/>
            <person name="Lucas S."/>
            <person name="Lapidus A."/>
            <person name="Barry K."/>
            <person name="Detter J.C."/>
            <person name="Glavina del Rio T."/>
            <person name="Hammon N."/>
            <person name="Israni S."/>
            <person name="Dalin E."/>
            <person name="Tice H."/>
            <person name="Pitluck S."/>
            <person name="Chertkov O."/>
            <person name="Brettin T."/>
            <person name="Bruce D."/>
            <person name="Han C."/>
            <person name="Tapia R."/>
            <person name="Gilna P."/>
            <person name="Schmutz J."/>
            <person name="Larimer F."/>
            <person name="Land M."/>
            <person name="Hauser L."/>
            <person name="Kyrpides N."/>
            <person name="Mikhailova N."/>
            <person name="Wu J.H.D."/>
            <person name="Newcomb M."/>
            <person name="Richardson P."/>
        </authorList>
    </citation>
    <scope>NUCLEOTIDE SEQUENCE [LARGE SCALE GENOMIC DNA]</scope>
    <source>
        <strain>ATCC 27405 / DSM 1237 / JCM 9322 / NBRC 103400 / NCIMB 10682 / NRRL B-4536 / VPI 7372</strain>
    </source>
</reference>
<reference key="2">
    <citation type="journal article" date="2010" name="FEMS Microbiol. Lett.">
        <title>The unique set of putative membrane-associated anti-sigma factors in Clostridium thermocellum suggests a novel extracellular carbohydrate-sensing mechanism involved in gene regulation.</title>
        <authorList>
            <person name="Kahel-Raifer H."/>
            <person name="Jindou S."/>
            <person name="Bahari L."/>
            <person name="Nataf Y."/>
            <person name="Shoham Y."/>
            <person name="Bayer E.A."/>
            <person name="Borovok I."/>
            <person name="Lamed R."/>
        </authorList>
    </citation>
    <scope>NOMENCLATURE</scope>
    <source>
        <strain>ATCC 27405 / DSM 1237 / JCM 9322 / NBRC 103400 / NCIMB 10682 / NRRL B-4536 / VPI 7372</strain>
    </source>
</reference>
<evidence type="ECO:0000250" key="1">
    <source>
        <dbReference type="UniProtKB" id="A3DBH1"/>
    </source>
</evidence>
<evidence type="ECO:0000255" key="2"/>
<evidence type="ECO:0000255" key="3">
    <source>
        <dbReference type="PROSITE-ProRule" id="PRU01196"/>
    </source>
</evidence>
<evidence type="ECO:0000256" key="4">
    <source>
        <dbReference type="SAM" id="MobiDB-lite"/>
    </source>
</evidence>
<evidence type="ECO:0000303" key="5">
    <source>
    </source>
</evidence>
<evidence type="ECO:0000305" key="6"/>
<evidence type="ECO:0000312" key="7">
    <source>
        <dbReference type="EMBL" id="ABN54171.1"/>
    </source>
</evidence>
<proteinExistence type="inferred from homology"/>
<comment type="function">
    <text evidence="1">Anti-sigma factor for SigI8. Negatively regulates SigI8 activity through direct interaction.</text>
</comment>
<comment type="subunit">
    <text evidence="3">Interacts (via RsgI N-terminal anti-sigma domain) with SigI8.</text>
</comment>
<comment type="subcellular location">
    <subcellularLocation>
        <location evidence="6">Cell membrane</location>
        <topology evidence="2">Single-pass membrane protein</topology>
    </subcellularLocation>
</comment>
<organism>
    <name type="scientific">Acetivibrio thermocellus (strain ATCC 27405 / DSM 1237 / JCM 9322 / NBRC 103400 / NCIMB 10682 / NRRL B-4536 / VPI 7372)</name>
    <name type="common">Clostridium thermocellum</name>
    <dbReference type="NCBI Taxonomy" id="203119"/>
    <lineage>
        <taxon>Bacteria</taxon>
        <taxon>Bacillati</taxon>
        <taxon>Bacillota</taxon>
        <taxon>Clostridia</taxon>
        <taxon>Eubacteriales</taxon>
        <taxon>Oscillospiraceae</taxon>
        <taxon>Acetivibrio</taxon>
    </lineage>
</organism>
<sequence>MTKQKGTILKLKNNLAIIMTSDCKIVSIKRQPGMYEGLEISFNKNEIINKKNKLAFYSRIAAGIAAIFIIMVISFNLFNNNDVYAYVAIDSDASIEFELDKNNKIVKVNYYNDNTNTVLDELDLKNKPVDFAIKEVIKKLDLNESVILISACLKEQNTKKSSASDNYESEKLSKLIDICKNAVEVNVSENVESKVVEVSYDYKKLAEKNKLSLGRSIVYEKAKEQGIALNIEDIKNKSIGETLQKVKIDDVGVVHNVKKEEPKKPMPEKPEPGKPEPQKPEPGKPDPAKPEPGKPGPEKPEPEKPEPAKPEPAKPEPQPQINDLPKDKTIPEEKTIPNSGVEPMAEPIVEPKDKQQEKPRPDSKLKLEEKPTVEPKDSLEEKPVTKPKDDKKEKAKNSIEKMP</sequence>
<protein>
    <recommendedName>
        <fullName evidence="6">Anti-sigma-I factor RsgI8</fullName>
    </recommendedName>
</protein>
<keyword id="KW-1003">Cell membrane</keyword>
<keyword id="KW-0472">Membrane</keyword>
<keyword id="KW-1185">Reference proteome</keyword>
<keyword id="KW-0812">Transmembrane</keyword>
<keyword id="KW-1133">Transmembrane helix</keyword>
<feature type="chain" id="PRO_0000436551" description="Anti-sigma-I factor RsgI8">
    <location>
        <begin position="1"/>
        <end position="403"/>
    </location>
</feature>
<feature type="topological domain" description="Cytoplasmic" evidence="6">
    <location>
        <begin position="1"/>
        <end position="59"/>
    </location>
</feature>
<feature type="transmembrane region" description="Helical" evidence="2">
    <location>
        <begin position="60"/>
        <end position="80"/>
    </location>
</feature>
<feature type="topological domain" description="Extracellular" evidence="6">
    <location>
        <begin position="81"/>
        <end position="403"/>
    </location>
</feature>
<feature type="domain" description="RsgI N-terminal anti-sigma" evidence="3">
    <location>
        <begin position="4"/>
        <end position="51"/>
    </location>
</feature>
<feature type="region of interest" description="Disordered" evidence="4">
    <location>
        <begin position="254"/>
        <end position="403"/>
    </location>
</feature>
<feature type="compositionally biased region" description="Basic and acidic residues" evidence="4">
    <location>
        <begin position="254"/>
        <end position="314"/>
    </location>
</feature>
<feature type="compositionally biased region" description="Basic and acidic residues" evidence="4">
    <location>
        <begin position="324"/>
        <end position="335"/>
    </location>
</feature>
<feature type="compositionally biased region" description="Basic and acidic residues" evidence="4">
    <location>
        <begin position="349"/>
        <end position="403"/>
    </location>
</feature>